<protein>
    <recommendedName>
        <fullName>Putative sulfate transporter YbaR</fullName>
    </recommendedName>
</protein>
<comment type="subcellular location">
    <subcellularLocation>
        <location evidence="3">Cell membrane</location>
        <topology evidence="3">Multi-pass membrane protein</topology>
    </subcellularLocation>
</comment>
<comment type="similarity">
    <text evidence="3">Belongs to the SLC26A/SulP transporter (TC 2.A.53) family.</text>
</comment>
<comment type="sequence caution" evidence="3">
    <conflict type="erroneous initiation">
        <sequence resource="EMBL-CDS" id="BAA12258"/>
    </conflict>
</comment>
<sequence>MNNSFTLKQQWFGNIRKDILAGILVALALIPEAIGFSIIAGVDPMVGLYASFCIAIIISIFGGRPGMISAATGSMAVVMVSLVADHGLQYLFAATILTGIIQVILGISKIARLMKFIPRSVMIGFVNALAILIFSAQLPQFEGASWSMYAMLAGSLVIIYVLPRFTTAVPSPLVAIIVMTIIAVTFHVDVRTVGDMGNISSSLPHFLIPDVPFTFETLQIIFPYSIALAFVGLLESLLTAQIIDEMTDTDSDKNKESRGQGIANIVTGFFGGMAGCAMIGQSVINTKAGGRGRLSAFVAGAFLMFLIAVLSHVVVKIPMAALVAVMVMVSVGTFDWSSLKGLKKAPLTDSIVMVVTVVTVVVTDDLSKGVFVGVLLSAVFFVAKISKLKIVSHAEDQKLRTYQVKGQIFFASVTDLTNAFIYQEDIERVVIDLTEAHVWDDSGAAALDKIVAKFKEQGIEAELKGLNKASKSLMKQMA</sequence>
<organism>
    <name type="scientific">Bacillus subtilis (strain 168)</name>
    <dbReference type="NCBI Taxonomy" id="224308"/>
    <lineage>
        <taxon>Bacteria</taxon>
        <taxon>Bacillati</taxon>
        <taxon>Bacillota</taxon>
        <taxon>Bacilli</taxon>
        <taxon>Bacillales</taxon>
        <taxon>Bacillaceae</taxon>
        <taxon>Bacillus</taxon>
    </lineage>
</organism>
<gene>
    <name type="primary">ybaR</name>
    <name type="ordered locus">BSU01580</name>
</gene>
<feature type="chain" id="PRO_0000080194" description="Putative sulfate transporter YbaR">
    <location>
        <begin position="1"/>
        <end position="478"/>
    </location>
</feature>
<feature type="transmembrane region" description="Helical" evidence="1">
    <location>
        <begin position="19"/>
        <end position="39"/>
    </location>
</feature>
<feature type="transmembrane region" description="Helical" evidence="1">
    <location>
        <begin position="42"/>
        <end position="62"/>
    </location>
</feature>
<feature type="transmembrane region" description="Helical" evidence="1">
    <location>
        <begin position="65"/>
        <end position="85"/>
    </location>
</feature>
<feature type="transmembrane region" description="Helical" evidence="1">
    <location>
        <begin position="87"/>
        <end position="107"/>
    </location>
</feature>
<feature type="transmembrane region" description="Helical" evidence="1">
    <location>
        <begin position="121"/>
        <end position="141"/>
    </location>
</feature>
<feature type="transmembrane region" description="Helical" evidence="1">
    <location>
        <begin position="143"/>
        <end position="163"/>
    </location>
</feature>
<feature type="transmembrane region" description="Helical" evidence="1">
    <location>
        <begin position="168"/>
        <end position="188"/>
    </location>
</feature>
<feature type="transmembrane region" description="Helical" evidence="1">
    <location>
        <begin position="220"/>
        <end position="240"/>
    </location>
</feature>
<feature type="transmembrane region" description="Helical" evidence="1">
    <location>
        <begin position="259"/>
        <end position="279"/>
    </location>
</feature>
<feature type="transmembrane region" description="Helical" evidence="1">
    <location>
        <begin position="295"/>
        <end position="315"/>
    </location>
</feature>
<feature type="transmembrane region" description="Helical" evidence="1">
    <location>
        <begin position="345"/>
        <end position="365"/>
    </location>
</feature>
<feature type="transmembrane region" description="Helical" evidence="1">
    <location>
        <begin position="366"/>
        <end position="386"/>
    </location>
</feature>
<feature type="domain" description="STAS" evidence="2">
    <location>
        <begin position="389"/>
        <end position="478"/>
    </location>
</feature>
<keyword id="KW-1003">Cell membrane</keyword>
<keyword id="KW-0472">Membrane</keyword>
<keyword id="KW-1185">Reference proteome</keyword>
<keyword id="KW-0812">Transmembrane</keyword>
<keyword id="KW-1133">Transmembrane helix</keyword>
<keyword id="KW-0813">Transport</keyword>
<name>YBAR_BACSU</name>
<dbReference type="EMBL" id="D84213">
    <property type="protein sequence ID" value="BAA12258.1"/>
    <property type="status" value="ALT_INIT"/>
    <property type="molecule type" value="Genomic_DNA"/>
</dbReference>
<dbReference type="EMBL" id="AL009126">
    <property type="protein sequence ID" value="CAB11934.1"/>
    <property type="molecule type" value="Genomic_DNA"/>
</dbReference>
<dbReference type="PIR" id="C69743">
    <property type="entry name" value="C69743"/>
</dbReference>
<dbReference type="RefSeq" id="NP_388039.1">
    <property type="nucleotide sequence ID" value="NC_000964.3"/>
</dbReference>
<dbReference type="RefSeq" id="WP_003234986.1">
    <property type="nucleotide sequence ID" value="NZ_OZ025638.1"/>
</dbReference>
<dbReference type="SMR" id="P55189"/>
<dbReference type="FunCoup" id="P55189">
    <property type="interactions" value="544"/>
</dbReference>
<dbReference type="STRING" id="224308.BSU01580"/>
<dbReference type="PaxDb" id="224308-BSU01580"/>
<dbReference type="EnsemblBacteria" id="CAB11934">
    <property type="protein sequence ID" value="CAB11934"/>
    <property type="gene ID" value="BSU_01580"/>
</dbReference>
<dbReference type="GeneID" id="938890"/>
<dbReference type="KEGG" id="bsu:BSU01580"/>
<dbReference type="PATRIC" id="fig|224308.179.peg.164"/>
<dbReference type="eggNOG" id="COG0659">
    <property type="taxonomic scope" value="Bacteria"/>
</dbReference>
<dbReference type="InParanoid" id="P55189"/>
<dbReference type="OrthoDB" id="9771198at2"/>
<dbReference type="PhylomeDB" id="P55189"/>
<dbReference type="BioCyc" id="BSUB:BSU01580-MONOMER"/>
<dbReference type="Proteomes" id="UP000001570">
    <property type="component" value="Chromosome"/>
</dbReference>
<dbReference type="GO" id="GO:0005886">
    <property type="term" value="C:plasma membrane"/>
    <property type="evidence" value="ECO:0007669"/>
    <property type="project" value="UniProtKB-SubCell"/>
</dbReference>
<dbReference type="GO" id="GO:0008271">
    <property type="term" value="F:secondary active sulfate transmembrane transporter activity"/>
    <property type="evidence" value="ECO:0007669"/>
    <property type="project" value="InterPro"/>
</dbReference>
<dbReference type="CDD" id="cd07042">
    <property type="entry name" value="STAS_SulP_like_sulfate_transporter"/>
    <property type="match status" value="1"/>
</dbReference>
<dbReference type="Gene3D" id="3.30.750.24">
    <property type="entry name" value="STAS domain"/>
    <property type="match status" value="1"/>
</dbReference>
<dbReference type="InterPro" id="IPR052706">
    <property type="entry name" value="Membrane-Transporter-like"/>
</dbReference>
<dbReference type="InterPro" id="IPR018045">
    <property type="entry name" value="S04_transporter_CS"/>
</dbReference>
<dbReference type="InterPro" id="IPR011547">
    <property type="entry name" value="SLC26A/SulP_dom"/>
</dbReference>
<dbReference type="InterPro" id="IPR001902">
    <property type="entry name" value="SLC26A/SulP_fam"/>
</dbReference>
<dbReference type="InterPro" id="IPR002645">
    <property type="entry name" value="STAS_dom"/>
</dbReference>
<dbReference type="InterPro" id="IPR036513">
    <property type="entry name" value="STAS_dom_sf"/>
</dbReference>
<dbReference type="NCBIfam" id="TIGR00815">
    <property type="entry name" value="sulP"/>
    <property type="match status" value="1"/>
</dbReference>
<dbReference type="PANTHER" id="PTHR43310">
    <property type="entry name" value="SULFATE TRANSPORTER YBAR-RELATED"/>
    <property type="match status" value="1"/>
</dbReference>
<dbReference type="PANTHER" id="PTHR43310:SF1">
    <property type="entry name" value="SULFATE TRANSPORTER YBAR-RELATED"/>
    <property type="match status" value="1"/>
</dbReference>
<dbReference type="Pfam" id="PF01740">
    <property type="entry name" value="STAS"/>
    <property type="match status" value="1"/>
</dbReference>
<dbReference type="Pfam" id="PF00916">
    <property type="entry name" value="Sulfate_transp"/>
    <property type="match status" value="2"/>
</dbReference>
<dbReference type="SUPFAM" id="SSF52091">
    <property type="entry name" value="SpoIIaa-like"/>
    <property type="match status" value="1"/>
</dbReference>
<dbReference type="PROSITE" id="PS01130">
    <property type="entry name" value="SLC26A"/>
    <property type="match status" value="1"/>
</dbReference>
<dbReference type="PROSITE" id="PS50801">
    <property type="entry name" value="STAS"/>
    <property type="match status" value="1"/>
</dbReference>
<proteinExistence type="inferred from homology"/>
<reference key="1">
    <citation type="journal article" date="1997" name="Microbiology">
        <title>Sequence and analysis of a 31 kb segment of the Bacillus subtilis chromosome in the area of the rrnH and rrnG operons.</title>
        <authorList>
            <person name="Liu H."/>
            <person name="Haga K."/>
            <person name="Yasumoto K."/>
            <person name="Ohashi Y."/>
            <person name="Yoshikawa H."/>
            <person name="Takahashi H."/>
        </authorList>
    </citation>
    <scope>NUCLEOTIDE SEQUENCE [GENOMIC DNA]</scope>
    <source>
        <strain>168</strain>
    </source>
</reference>
<reference key="2">
    <citation type="journal article" date="1997" name="Nature">
        <title>The complete genome sequence of the Gram-positive bacterium Bacillus subtilis.</title>
        <authorList>
            <person name="Kunst F."/>
            <person name="Ogasawara N."/>
            <person name="Moszer I."/>
            <person name="Albertini A.M."/>
            <person name="Alloni G."/>
            <person name="Azevedo V."/>
            <person name="Bertero M.G."/>
            <person name="Bessieres P."/>
            <person name="Bolotin A."/>
            <person name="Borchert S."/>
            <person name="Borriss R."/>
            <person name="Boursier L."/>
            <person name="Brans A."/>
            <person name="Braun M."/>
            <person name="Brignell S.C."/>
            <person name="Bron S."/>
            <person name="Brouillet S."/>
            <person name="Bruschi C.V."/>
            <person name="Caldwell B."/>
            <person name="Capuano V."/>
            <person name="Carter N.M."/>
            <person name="Choi S.-K."/>
            <person name="Codani J.-J."/>
            <person name="Connerton I.F."/>
            <person name="Cummings N.J."/>
            <person name="Daniel R.A."/>
            <person name="Denizot F."/>
            <person name="Devine K.M."/>
            <person name="Duesterhoeft A."/>
            <person name="Ehrlich S.D."/>
            <person name="Emmerson P.T."/>
            <person name="Entian K.-D."/>
            <person name="Errington J."/>
            <person name="Fabret C."/>
            <person name="Ferrari E."/>
            <person name="Foulger D."/>
            <person name="Fritz C."/>
            <person name="Fujita M."/>
            <person name="Fujita Y."/>
            <person name="Fuma S."/>
            <person name="Galizzi A."/>
            <person name="Galleron N."/>
            <person name="Ghim S.-Y."/>
            <person name="Glaser P."/>
            <person name="Goffeau A."/>
            <person name="Golightly E.J."/>
            <person name="Grandi G."/>
            <person name="Guiseppi G."/>
            <person name="Guy B.J."/>
            <person name="Haga K."/>
            <person name="Haiech J."/>
            <person name="Harwood C.R."/>
            <person name="Henaut A."/>
            <person name="Hilbert H."/>
            <person name="Holsappel S."/>
            <person name="Hosono S."/>
            <person name="Hullo M.-F."/>
            <person name="Itaya M."/>
            <person name="Jones L.-M."/>
            <person name="Joris B."/>
            <person name="Karamata D."/>
            <person name="Kasahara Y."/>
            <person name="Klaerr-Blanchard M."/>
            <person name="Klein C."/>
            <person name="Kobayashi Y."/>
            <person name="Koetter P."/>
            <person name="Koningstein G."/>
            <person name="Krogh S."/>
            <person name="Kumano M."/>
            <person name="Kurita K."/>
            <person name="Lapidus A."/>
            <person name="Lardinois S."/>
            <person name="Lauber J."/>
            <person name="Lazarevic V."/>
            <person name="Lee S.-M."/>
            <person name="Levine A."/>
            <person name="Liu H."/>
            <person name="Masuda S."/>
            <person name="Mauel C."/>
            <person name="Medigue C."/>
            <person name="Medina N."/>
            <person name="Mellado R.P."/>
            <person name="Mizuno M."/>
            <person name="Moestl D."/>
            <person name="Nakai S."/>
            <person name="Noback M."/>
            <person name="Noone D."/>
            <person name="O'Reilly M."/>
            <person name="Ogawa K."/>
            <person name="Ogiwara A."/>
            <person name="Oudega B."/>
            <person name="Park S.-H."/>
            <person name="Parro V."/>
            <person name="Pohl T.M."/>
            <person name="Portetelle D."/>
            <person name="Porwollik S."/>
            <person name="Prescott A.M."/>
            <person name="Presecan E."/>
            <person name="Pujic P."/>
            <person name="Purnelle B."/>
            <person name="Rapoport G."/>
            <person name="Rey M."/>
            <person name="Reynolds S."/>
            <person name="Rieger M."/>
            <person name="Rivolta C."/>
            <person name="Rocha E."/>
            <person name="Roche B."/>
            <person name="Rose M."/>
            <person name="Sadaie Y."/>
            <person name="Sato T."/>
            <person name="Scanlan E."/>
            <person name="Schleich S."/>
            <person name="Schroeter R."/>
            <person name="Scoffone F."/>
            <person name="Sekiguchi J."/>
            <person name="Sekowska A."/>
            <person name="Seror S.J."/>
            <person name="Serror P."/>
            <person name="Shin B.-S."/>
            <person name="Soldo B."/>
            <person name="Sorokin A."/>
            <person name="Tacconi E."/>
            <person name="Takagi T."/>
            <person name="Takahashi H."/>
            <person name="Takemaru K."/>
            <person name="Takeuchi M."/>
            <person name="Tamakoshi A."/>
            <person name="Tanaka T."/>
            <person name="Terpstra P."/>
            <person name="Tognoni A."/>
            <person name="Tosato V."/>
            <person name="Uchiyama S."/>
            <person name="Vandenbol M."/>
            <person name="Vannier F."/>
            <person name="Vassarotti A."/>
            <person name="Viari A."/>
            <person name="Wambutt R."/>
            <person name="Wedler E."/>
            <person name="Wedler H."/>
            <person name="Weitzenegger T."/>
            <person name="Winters P."/>
            <person name="Wipat A."/>
            <person name="Yamamoto H."/>
            <person name="Yamane K."/>
            <person name="Yasumoto K."/>
            <person name="Yata K."/>
            <person name="Yoshida K."/>
            <person name="Yoshikawa H.-F."/>
            <person name="Zumstein E."/>
            <person name="Yoshikawa H."/>
            <person name="Danchin A."/>
        </authorList>
    </citation>
    <scope>NUCLEOTIDE SEQUENCE [LARGE SCALE GENOMIC DNA]</scope>
    <source>
        <strain>168</strain>
    </source>
</reference>
<accession>P55189</accession>
<accession>Q9S6X8</accession>
<evidence type="ECO:0000255" key="1"/>
<evidence type="ECO:0000255" key="2">
    <source>
        <dbReference type="PROSITE-ProRule" id="PRU00198"/>
    </source>
</evidence>
<evidence type="ECO:0000305" key="3"/>